<sequence>MSAATKKRYITNKVGSEFYELAEEDIIAQVRQSRGNNLHEVLDQNGDSYVVSMPTKFRKAVWLRRDQFVVVRPIAEGDKVKGEIEYILDQDNVLYIRELGKWPSCFEEHALKMTREAKRGKANDKMIDDDMLPPSESEEEDDESEDEIEDTYDEDEETDDEEFDTYNPNRMQAPSK</sequence>
<accession>P0C659</accession>
<accession>A8X8U8</accession>
<comment type="similarity">
    <text evidence="2">Belongs to the EIF1AD family.</text>
</comment>
<dbReference type="EMBL" id="HE600998">
    <property type="protein sequence ID" value="CAP29059.1"/>
    <property type="molecule type" value="Genomic_DNA"/>
</dbReference>
<dbReference type="RefSeq" id="XP_002637050.1">
    <property type="nucleotide sequence ID" value="XM_002637004.1"/>
</dbReference>
<dbReference type="SMR" id="P0C659"/>
<dbReference type="FunCoup" id="P0C659">
    <property type="interactions" value="2412"/>
</dbReference>
<dbReference type="STRING" id="6238.P0C659"/>
<dbReference type="EnsemblMetazoa" id="CBG09545.1">
    <property type="protein sequence ID" value="CBG09545.1"/>
    <property type="gene ID" value="WBGene00031109"/>
</dbReference>
<dbReference type="GeneID" id="8579046"/>
<dbReference type="KEGG" id="cbr:CBG_09545"/>
<dbReference type="CTD" id="8579046"/>
<dbReference type="WormBase" id="CBG09545">
    <property type="protein sequence ID" value="CBP02312"/>
    <property type="gene ID" value="WBGene00031109"/>
</dbReference>
<dbReference type="eggNOG" id="KOG2925">
    <property type="taxonomic scope" value="Eukaryota"/>
</dbReference>
<dbReference type="HOGENOM" id="CLU_106477_1_0_1"/>
<dbReference type="InParanoid" id="P0C659"/>
<dbReference type="OMA" id="PNRMQAP"/>
<dbReference type="OrthoDB" id="1738325at2759"/>
<dbReference type="Proteomes" id="UP000008549">
    <property type="component" value="Unassembled WGS sequence"/>
</dbReference>
<dbReference type="GO" id="GO:0005634">
    <property type="term" value="C:nucleus"/>
    <property type="evidence" value="ECO:0000318"/>
    <property type="project" value="GO_Central"/>
</dbReference>
<dbReference type="GO" id="GO:0003723">
    <property type="term" value="F:RNA binding"/>
    <property type="evidence" value="ECO:0007669"/>
    <property type="project" value="UniProtKB-KW"/>
</dbReference>
<dbReference type="GO" id="GO:0003743">
    <property type="term" value="F:translation initiation factor activity"/>
    <property type="evidence" value="ECO:0007669"/>
    <property type="project" value="InterPro"/>
</dbReference>
<dbReference type="Gene3D" id="2.40.50.140">
    <property type="entry name" value="Nucleic acid-binding proteins"/>
    <property type="match status" value="1"/>
</dbReference>
<dbReference type="InterPro" id="IPR039294">
    <property type="entry name" value="EIF1AD"/>
</dbReference>
<dbReference type="InterPro" id="IPR012340">
    <property type="entry name" value="NA-bd_OB-fold"/>
</dbReference>
<dbReference type="InterPro" id="IPR006196">
    <property type="entry name" value="RNA-binding_domain_S1_IF1"/>
</dbReference>
<dbReference type="InterPro" id="IPR001253">
    <property type="entry name" value="TIF_eIF-1A"/>
</dbReference>
<dbReference type="PANTHER" id="PTHR21641:SF0">
    <property type="entry name" value="RNA-BINDING PROTEIN EIF1AD-RELATED"/>
    <property type="match status" value="1"/>
</dbReference>
<dbReference type="PANTHER" id="PTHR21641">
    <property type="entry name" value="TRANSLATION INITIATION FACTOR-RELATED"/>
    <property type="match status" value="1"/>
</dbReference>
<dbReference type="Pfam" id="PF01176">
    <property type="entry name" value="eIF-1a"/>
    <property type="match status" value="1"/>
</dbReference>
<dbReference type="SMART" id="SM00652">
    <property type="entry name" value="eIF1a"/>
    <property type="match status" value="1"/>
</dbReference>
<dbReference type="SUPFAM" id="SSF50249">
    <property type="entry name" value="Nucleic acid-binding proteins"/>
    <property type="match status" value="1"/>
</dbReference>
<feature type="chain" id="PRO_0000314160" description="Probable RNA-binding protein EIF1AD">
    <location>
        <begin position="1"/>
        <end position="176"/>
    </location>
</feature>
<feature type="domain" description="S1-like">
    <location>
        <begin position="5"/>
        <end position="89"/>
    </location>
</feature>
<feature type="region of interest" description="Disordered" evidence="1">
    <location>
        <begin position="117"/>
        <end position="176"/>
    </location>
</feature>
<feature type="compositionally biased region" description="Basic and acidic residues" evidence="1">
    <location>
        <begin position="117"/>
        <end position="128"/>
    </location>
</feature>
<feature type="compositionally biased region" description="Acidic residues" evidence="1">
    <location>
        <begin position="129"/>
        <end position="164"/>
    </location>
</feature>
<feature type="compositionally biased region" description="Polar residues" evidence="1">
    <location>
        <begin position="166"/>
        <end position="176"/>
    </location>
</feature>
<keyword id="KW-1185">Reference proteome</keyword>
<keyword id="KW-0694">RNA-binding</keyword>
<gene>
    <name type="ORF">CBG09545</name>
</gene>
<evidence type="ECO:0000256" key="1">
    <source>
        <dbReference type="SAM" id="MobiDB-lite"/>
    </source>
</evidence>
<evidence type="ECO:0000305" key="2"/>
<proteinExistence type="inferred from homology"/>
<name>EIF1A_CAEBR</name>
<protein>
    <recommendedName>
        <fullName>Probable RNA-binding protein EIF1AD</fullName>
    </recommendedName>
    <alternativeName>
        <fullName>Eukaryotic translation initiation factor 1A domain-containing protein</fullName>
    </alternativeName>
</protein>
<reference key="1">
    <citation type="journal article" date="2003" name="PLoS Biol.">
        <title>The genome sequence of Caenorhabditis briggsae: a platform for comparative genomics.</title>
        <authorList>
            <person name="Stein L.D."/>
            <person name="Bao Z."/>
            <person name="Blasiar D."/>
            <person name="Blumenthal T."/>
            <person name="Brent M.R."/>
            <person name="Chen N."/>
            <person name="Chinwalla A."/>
            <person name="Clarke L."/>
            <person name="Clee C."/>
            <person name="Coghlan A."/>
            <person name="Coulson A."/>
            <person name="D'Eustachio P."/>
            <person name="Fitch D.H.A."/>
            <person name="Fulton L.A."/>
            <person name="Fulton R.E."/>
            <person name="Griffiths-Jones S."/>
            <person name="Harris T.W."/>
            <person name="Hillier L.W."/>
            <person name="Kamath R."/>
            <person name="Kuwabara P.E."/>
            <person name="Mardis E.R."/>
            <person name="Marra M.A."/>
            <person name="Miner T.L."/>
            <person name="Minx P."/>
            <person name="Mullikin J.C."/>
            <person name="Plumb R.W."/>
            <person name="Rogers J."/>
            <person name="Schein J.E."/>
            <person name="Sohrmann M."/>
            <person name="Spieth J."/>
            <person name="Stajich J.E."/>
            <person name="Wei C."/>
            <person name="Willey D."/>
            <person name="Wilson R.K."/>
            <person name="Durbin R.M."/>
            <person name="Waterston R.H."/>
        </authorList>
    </citation>
    <scope>NUCLEOTIDE SEQUENCE [LARGE SCALE GENOMIC DNA]</scope>
    <source>
        <strain>AF16</strain>
    </source>
</reference>
<organism>
    <name type="scientific">Caenorhabditis briggsae</name>
    <dbReference type="NCBI Taxonomy" id="6238"/>
    <lineage>
        <taxon>Eukaryota</taxon>
        <taxon>Metazoa</taxon>
        <taxon>Ecdysozoa</taxon>
        <taxon>Nematoda</taxon>
        <taxon>Chromadorea</taxon>
        <taxon>Rhabditida</taxon>
        <taxon>Rhabditina</taxon>
        <taxon>Rhabditomorpha</taxon>
        <taxon>Rhabditoidea</taxon>
        <taxon>Rhabditidae</taxon>
        <taxon>Peloderinae</taxon>
        <taxon>Caenorhabditis</taxon>
    </lineage>
</organism>